<accession>Q327L3</accession>
<evidence type="ECO:0000255" key="1">
    <source>
        <dbReference type="HAMAP-Rule" id="MF_00740"/>
    </source>
</evidence>
<name>DEOB_SHIDS</name>
<protein>
    <recommendedName>
        <fullName evidence="1">Phosphopentomutase</fullName>
        <ecNumber evidence="1">5.4.2.7</ecNumber>
    </recommendedName>
    <alternativeName>
        <fullName evidence="1">Phosphodeoxyribomutase</fullName>
    </alternativeName>
</protein>
<proteinExistence type="inferred from homology"/>
<feature type="chain" id="PRO_0000258304" description="Phosphopentomutase">
    <location>
        <begin position="1"/>
        <end position="407"/>
    </location>
</feature>
<feature type="binding site" evidence="1">
    <location>
        <position position="10"/>
    </location>
    <ligand>
        <name>Mn(2+)</name>
        <dbReference type="ChEBI" id="CHEBI:29035"/>
        <label>1</label>
    </ligand>
</feature>
<feature type="binding site" evidence="1">
    <location>
        <position position="306"/>
    </location>
    <ligand>
        <name>Mn(2+)</name>
        <dbReference type="ChEBI" id="CHEBI:29035"/>
        <label>2</label>
    </ligand>
</feature>
<feature type="binding site" evidence="1">
    <location>
        <position position="311"/>
    </location>
    <ligand>
        <name>Mn(2+)</name>
        <dbReference type="ChEBI" id="CHEBI:29035"/>
        <label>2</label>
    </ligand>
</feature>
<feature type="binding site" evidence="1">
    <location>
        <position position="347"/>
    </location>
    <ligand>
        <name>Mn(2+)</name>
        <dbReference type="ChEBI" id="CHEBI:29035"/>
        <label>1</label>
    </ligand>
</feature>
<feature type="binding site" evidence="1">
    <location>
        <position position="348"/>
    </location>
    <ligand>
        <name>Mn(2+)</name>
        <dbReference type="ChEBI" id="CHEBI:29035"/>
        <label>1</label>
    </ligand>
</feature>
<feature type="binding site" evidence="1">
    <location>
        <position position="359"/>
    </location>
    <ligand>
        <name>Mn(2+)</name>
        <dbReference type="ChEBI" id="CHEBI:29035"/>
        <label>2</label>
    </ligand>
</feature>
<keyword id="KW-0963">Cytoplasm</keyword>
<keyword id="KW-0413">Isomerase</keyword>
<keyword id="KW-0464">Manganese</keyword>
<keyword id="KW-0479">Metal-binding</keyword>
<keyword id="KW-1185">Reference proteome</keyword>
<comment type="function">
    <text evidence="1">Isomerase that catalyzes the conversion of deoxy-ribose 1-phosphate (dRib-1-P) and ribose 1-phosphate (Rib-1-P) to deoxy-ribose 5-phosphate (dRib-5-P) and ribose 5-phosphate (Rib-5-P), respectively.</text>
</comment>
<comment type="catalytic activity">
    <reaction evidence="1">
        <text>2-deoxy-alpha-D-ribose 1-phosphate = 2-deoxy-D-ribose 5-phosphate</text>
        <dbReference type="Rhea" id="RHEA:27658"/>
        <dbReference type="ChEBI" id="CHEBI:57259"/>
        <dbReference type="ChEBI" id="CHEBI:62877"/>
        <dbReference type="EC" id="5.4.2.7"/>
    </reaction>
</comment>
<comment type="catalytic activity">
    <reaction evidence="1">
        <text>alpha-D-ribose 1-phosphate = D-ribose 5-phosphate</text>
        <dbReference type="Rhea" id="RHEA:18793"/>
        <dbReference type="ChEBI" id="CHEBI:57720"/>
        <dbReference type="ChEBI" id="CHEBI:78346"/>
        <dbReference type="EC" id="5.4.2.7"/>
    </reaction>
</comment>
<comment type="cofactor">
    <cofactor evidence="1">
        <name>Mn(2+)</name>
        <dbReference type="ChEBI" id="CHEBI:29035"/>
    </cofactor>
    <text evidence="1">Binds 2 manganese ions.</text>
</comment>
<comment type="pathway">
    <text evidence="1">Carbohydrate degradation; 2-deoxy-D-ribose 1-phosphate degradation; D-glyceraldehyde 3-phosphate and acetaldehyde from 2-deoxy-alpha-D-ribose 1-phosphate: step 1/2.</text>
</comment>
<comment type="subcellular location">
    <subcellularLocation>
        <location evidence="1">Cytoplasm</location>
    </subcellularLocation>
</comment>
<comment type="similarity">
    <text evidence="1">Belongs to the phosphopentomutase family.</text>
</comment>
<dbReference type="EC" id="5.4.2.7" evidence="1"/>
<dbReference type="EMBL" id="CP000034">
    <property type="protein sequence ID" value="ABB64492.1"/>
    <property type="molecule type" value="Genomic_DNA"/>
</dbReference>
<dbReference type="RefSeq" id="WP_000816482.1">
    <property type="nucleotide sequence ID" value="NC_007606.1"/>
</dbReference>
<dbReference type="RefSeq" id="YP_405983.1">
    <property type="nucleotide sequence ID" value="NC_007606.1"/>
</dbReference>
<dbReference type="SMR" id="Q327L3"/>
<dbReference type="STRING" id="300267.SDY_4643"/>
<dbReference type="EnsemblBacteria" id="ABB64492">
    <property type="protein sequence ID" value="ABB64492"/>
    <property type="gene ID" value="SDY_4643"/>
</dbReference>
<dbReference type="KEGG" id="sdy:SDY_4643"/>
<dbReference type="PATRIC" id="fig|300267.13.peg.5504"/>
<dbReference type="HOGENOM" id="CLU_053861_0_0_6"/>
<dbReference type="UniPathway" id="UPA00002">
    <property type="reaction ID" value="UER00467"/>
</dbReference>
<dbReference type="Proteomes" id="UP000002716">
    <property type="component" value="Chromosome"/>
</dbReference>
<dbReference type="GO" id="GO:0005829">
    <property type="term" value="C:cytosol"/>
    <property type="evidence" value="ECO:0007669"/>
    <property type="project" value="TreeGrafter"/>
</dbReference>
<dbReference type="GO" id="GO:0000287">
    <property type="term" value="F:magnesium ion binding"/>
    <property type="evidence" value="ECO:0007669"/>
    <property type="project" value="InterPro"/>
</dbReference>
<dbReference type="GO" id="GO:0030145">
    <property type="term" value="F:manganese ion binding"/>
    <property type="evidence" value="ECO:0007669"/>
    <property type="project" value="UniProtKB-UniRule"/>
</dbReference>
<dbReference type="GO" id="GO:0008973">
    <property type="term" value="F:phosphopentomutase activity"/>
    <property type="evidence" value="ECO:0007669"/>
    <property type="project" value="UniProtKB-UniRule"/>
</dbReference>
<dbReference type="GO" id="GO:0006018">
    <property type="term" value="P:2-deoxyribose 1-phosphate catabolic process"/>
    <property type="evidence" value="ECO:0007669"/>
    <property type="project" value="UniProtKB-UniRule"/>
</dbReference>
<dbReference type="GO" id="GO:0006015">
    <property type="term" value="P:5-phosphoribose 1-diphosphate biosynthetic process"/>
    <property type="evidence" value="ECO:0007669"/>
    <property type="project" value="UniProtKB-UniPathway"/>
</dbReference>
<dbReference type="GO" id="GO:0043094">
    <property type="term" value="P:metabolic compound salvage"/>
    <property type="evidence" value="ECO:0007669"/>
    <property type="project" value="InterPro"/>
</dbReference>
<dbReference type="GO" id="GO:0009117">
    <property type="term" value="P:nucleotide metabolic process"/>
    <property type="evidence" value="ECO:0007669"/>
    <property type="project" value="InterPro"/>
</dbReference>
<dbReference type="CDD" id="cd16009">
    <property type="entry name" value="PPM"/>
    <property type="match status" value="1"/>
</dbReference>
<dbReference type="FunFam" id="3.30.70.1250:FF:000001">
    <property type="entry name" value="Phosphopentomutase"/>
    <property type="match status" value="1"/>
</dbReference>
<dbReference type="Gene3D" id="3.40.720.10">
    <property type="entry name" value="Alkaline Phosphatase, subunit A"/>
    <property type="match status" value="1"/>
</dbReference>
<dbReference type="Gene3D" id="3.30.70.1250">
    <property type="entry name" value="Phosphopentomutase"/>
    <property type="match status" value="1"/>
</dbReference>
<dbReference type="HAMAP" id="MF_00740">
    <property type="entry name" value="Phosphopentomut"/>
    <property type="match status" value="1"/>
</dbReference>
<dbReference type="InterPro" id="IPR017850">
    <property type="entry name" value="Alkaline_phosphatase_core_sf"/>
</dbReference>
<dbReference type="InterPro" id="IPR010045">
    <property type="entry name" value="DeoB"/>
</dbReference>
<dbReference type="InterPro" id="IPR006124">
    <property type="entry name" value="Metalloenzyme"/>
</dbReference>
<dbReference type="InterPro" id="IPR024052">
    <property type="entry name" value="Phosphopentomutase_DeoB_cap_sf"/>
</dbReference>
<dbReference type="NCBIfam" id="TIGR01696">
    <property type="entry name" value="deoB"/>
    <property type="match status" value="1"/>
</dbReference>
<dbReference type="NCBIfam" id="NF003766">
    <property type="entry name" value="PRK05362.1"/>
    <property type="match status" value="1"/>
</dbReference>
<dbReference type="PANTHER" id="PTHR21110">
    <property type="entry name" value="PHOSPHOPENTOMUTASE"/>
    <property type="match status" value="1"/>
</dbReference>
<dbReference type="PANTHER" id="PTHR21110:SF0">
    <property type="entry name" value="PHOSPHOPENTOMUTASE"/>
    <property type="match status" value="1"/>
</dbReference>
<dbReference type="Pfam" id="PF01676">
    <property type="entry name" value="Metalloenzyme"/>
    <property type="match status" value="1"/>
</dbReference>
<dbReference type="PIRSF" id="PIRSF001491">
    <property type="entry name" value="Ppentomutase"/>
    <property type="match status" value="1"/>
</dbReference>
<dbReference type="SUPFAM" id="SSF53649">
    <property type="entry name" value="Alkaline phosphatase-like"/>
    <property type="match status" value="1"/>
</dbReference>
<dbReference type="SUPFAM" id="SSF143856">
    <property type="entry name" value="DeoB insert domain-like"/>
    <property type="match status" value="1"/>
</dbReference>
<sequence length="407" mass="44381">MKRAFIMVLDSFGIGATEDAERFGDVGADTLGHIAEACAKGKADNGRKGPLNLPNLTRLGLAKAHEGSTGFIPAGMDGNAEVIGAYAWAHEMSSGKDTPSGHWEIAGVPVLFEWGYFSDHENSFPQELLDKLVERANLPGYLGNCHSSGTVILDQLGEEHMKTGKPIFYTSADSVFQIACHEETFGLDKLYELCEIAREELINGGYNIGRVIARPFIGDKAGNFQRTGNRHDLAVEPPAPTVLQKLVDEKHGQVVSVGKIADIYANCGITKKVKATGLDALFDATIKEMKEAGDNTIVFTNFVDFDSSWGHRRDVAGYAAGLELFDRRLPELMSLLRDDDILILTADHGCDPTWTGTDHTREHIPVLVYGPKVKPGSLGHRETFADIGQTLAKYFGTSDMEYGKAMF</sequence>
<reference key="1">
    <citation type="journal article" date="2005" name="Nucleic Acids Res.">
        <title>Genome dynamics and diversity of Shigella species, the etiologic agents of bacillary dysentery.</title>
        <authorList>
            <person name="Yang F."/>
            <person name="Yang J."/>
            <person name="Zhang X."/>
            <person name="Chen L."/>
            <person name="Jiang Y."/>
            <person name="Yan Y."/>
            <person name="Tang X."/>
            <person name="Wang J."/>
            <person name="Xiong Z."/>
            <person name="Dong J."/>
            <person name="Xue Y."/>
            <person name="Zhu Y."/>
            <person name="Xu X."/>
            <person name="Sun L."/>
            <person name="Chen S."/>
            <person name="Nie H."/>
            <person name="Peng J."/>
            <person name="Xu J."/>
            <person name="Wang Y."/>
            <person name="Yuan Z."/>
            <person name="Wen Y."/>
            <person name="Yao Z."/>
            <person name="Shen Y."/>
            <person name="Qiang B."/>
            <person name="Hou Y."/>
            <person name="Yu J."/>
            <person name="Jin Q."/>
        </authorList>
    </citation>
    <scope>NUCLEOTIDE SEQUENCE [LARGE SCALE GENOMIC DNA]</scope>
    <source>
        <strain>Sd197</strain>
    </source>
</reference>
<organism>
    <name type="scientific">Shigella dysenteriae serotype 1 (strain Sd197)</name>
    <dbReference type="NCBI Taxonomy" id="300267"/>
    <lineage>
        <taxon>Bacteria</taxon>
        <taxon>Pseudomonadati</taxon>
        <taxon>Pseudomonadota</taxon>
        <taxon>Gammaproteobacteria</taxon>
        <taxon>Enterobacterales</taxon>
        <taxon>Enterobacteriaceae</taxon>
        <taxon>Shigella</taxon>
    </lineage>
</organism>
<gene>
    <name evidence="1" type="primary">deoB</name>
    <name type="ordered locus">SDY_4643</name>
</gene>